<evidence type="ECO:0000255" key="1">
    <source>
        <dbReference type="HAMAP-Rule" id="MF_00451"/>
    </source>
</evidence>
<dbReference type="EC" id="2.7.4.6" evidence="1"/>
<dbReference type="EMBL" id="CP000283">
    <property type="protein sequence ID" value="ABE40187.1"/>
    <property type="molecule type" value="Genomic_DNA"/>
</dbReference>
<dbReference type="SMR" id="Q135Q2"/>
<dbReference type="STRING" id="316057.RPD_2961"/>
<dbReference type="KEGG" id="rpd:RPD_2961"/>
<dbReference type="eggNOG" id="COG0105">
    <property type="taxonomic scope" value="Bacteria"/>
</dbReference>
<dbReference type="HOGENOM" id="CLU_060216_8_1_5"/>
<dbReference type="BioCyc" id="RPAL316057:RPD_RS14875-MONOMER"/>
<dbReference type="Proteomes" id="UP000001818">
    <property type="component" value="Chromosome"/>
</dbReference>
<dbReference type="GO" id="GO:0005737">
    <property type="term" value="C:cytoplasm"/>
    <property type="evidence" value="ECO:0007669"/>
    <property type="project" value="UniProtKB-SubCell"/>
</dbReference>
<dbReference type="GO" id="GO:0005524">
    <property type="term" value="F:ATP binding"/>
    <property type="evidence" value="ECO:0007669"/>
    <property type="project" value="UniProtKB-UniRule"/>
</dbReference>
<dbReference type="GO" id="GO:0046872">
    <property type="term" value="F:metal ion binding"/>
    <property type="evidence" value="ECO:0007669"/>
    <property type="project" value="UniProtKB-KW"/>
</dbReference>
<dbReference type="GO" id="GO:0004550">
    <property type="term" value="F:nucleoside diphosphate kinase activity"/>
    <property type="evidence" value="ECO:0007669"/>
    <property type="project" value="UniProtKB-UniRule"/>
</dbReference>
<dbReference type="GO" id="GO:0006241">
    <property type="term" value="P:CTP biosynthetic process"/>
    <property type="evidence" value="ECO:0007669"/>
    <property type="project" value="UniProtKB-UniRule"/>
</dbReference>
<dbReference type="GO" id="GO:0006183">
    <property type="term" value="P:GTP biosynthetic process"/>
    <property type="evidence" value="ECO:0007669"/>
    <property type="project" value="UniProtKB-UniRule"/>
</dbReference>
<dbReference type="GO" id="GO:0006228">
    <property type="term" value="P:UTP biosynthetic process"/>
    <property type="evidence" value="ECO:0007669"/>
    <property type="project" value="UniProtKB-UniRule"/>
</dbReference>
<dbReference type="CDD" id="cd04413">
    <property type="entry name" value="NDPk_I"/>
    <property type="match status" value="1"/>
</dbReference>
<dbReference type="FunFam" id="3.30.70.141:FF:000001">
    <property type="entry name" value="Nucleoside diphosphate kinase"/>
    <property type="match status" value="1"/>
</dbReference>
<dbReference type="Gene3D" id="3.30.70.141">
    <property type="entry name" value="Nucleoside diphosphate kinase-like domain"/>
    <property type="match status" value="1"/>
</dbReference>
<dbReference type="HAMAP" id="MF_00451">
    <property type="entry name" value="NDP_kinase"/>
    <property type="match status" value="1"/>
</dbReference>
<dbReference type="InterPro" id="IPR034907">
    <property type="entry name" value="NDK-like_dom"/>
</dbReference>
<dbReference type="InterPro" id="IPR036850">
    <property type="entry name" value="NDK-like_dom_sf"/>
</dbReference>
<dbReference type="InterPro" id="IPR001564">
    <property type="entry name" value="Nucleoside_diP_kinase"/>
</dbReference>
<dbReference type="InterPro" id="IPR023005">
    <property type="entry name" value="Nucleoside_diP_kinase_AS"/>
</dbReference>
<dbReference type="NCBIfam" id="NF001908">
    <property type="entry name" value="PRK00668.1"/>
    <property type="match status" value="1"/>
</dbReference>
<dbReference type="PANTHER" id="PTHR46161">
    <property type="entry name" value="NUCLEOSIDE DIPHOSPHATE KINASE"/>
    <property type="match status" value="1"/>
</dbReference>
<dbReference type="PANTHER" id="PTHR46161:SF3">
    <property type="entry name" value="NUCLEOSIDE DIPHOSPHATE KINASE DDB_G0292928-RELATED"/>
    <property type="match status" value="1"/>
</dbReference>
<dbReference type="Pfam" id="PF00334">
    <property type="entry name" value="NDK"/>
    <property type="match status" value="1"/>
</dbReference>
<dbReference type="PRINTS" id="PR01243">
    <property type="entry name" value="NUCDPKINASE"/>
</dbReference>
<dbReference type="SMART" id="SM00562">
    <property type="entry name" value="NDK"/>
    <property type="match status" value="1"/>
</dbReference>
<dbReference type="SUPFAM" id="SSF54919">
    <property type="entry name" value="Nucleoside diphosphate kinase, NDK"/>
    <property type="match status" value="1"/>
</dbReference>
<dbReference type="PROSITE" id="PS00469">
    <property type="entry name" value="NDPK"/>
    <property type="match status" value="1"/>
</dbReference>
<dbReference type="PROSITE" id="PS51374">
    <property type="entry name" value="NDPK_LIKE"/>
    <property type="match status" value="1"/>
</dbReference>
<protein>
    <recommendedName>
        <fullName evidence="1">Nucleoside diphosphate kinase</fullName>
        <shortName evidence="1">NDK</shortName>
        <shortName evidence="1">NDP kinase</shortName>
        <ecNumber evidence="1">2.7.4.6</ecNumber>
    </recommendedName>
    <alternativeName>
        <fullName evidence="1">Nucleoside-2-P kinase</fullName>
    </alternativeName>
</protein>
<keyword id="KW-0067">ATP-binding</keyword>
<keyword id="KW-0963">Cytoplasm</keyword>
<keyword id="KW-0418">Kinase</keyword>
<keyword id="KW-0460">Magnesium</keyword>
<keyword id="KW-0479">Metal-binding</keyword>
<keyword id="KW-0546">Nucleotide metabolism</keyword>
<keyword id="KW-0547">Nucleotide-binding</keyword>
<keyword id="KW-0597">Phosphoprotein</keyword>
<keyword id="KW-0808">Transferase</keyword>
<comment type="function">
    <text evidence="1">Major role in the synthesis of nucleoside triphosphates other than ATP. The ATP gamma phosphate is transferred to the NDP beta phosphate via a ping-pong mechanism, using a phosphorylated active-site intermediate.</text>
</comment>
<comment type="catalytic activity">
    <reaction evidence="1">
        <text>a 2'-deoxyribonucleoside 5'-diphosphate + ATP = a 2'-deoxyribonucleoside 5'-triphosphate + ADP</text>
        <dbReference type="Rhea" id="RHEA:44640"/>
        <dbReference type="ChEBI" id="CHEBI:30616"/>
        <dbReference type="ChEBI" id="CHEBI:61560"/>
        <dbReference type="ChEBI" id="CHEBI:73316"/>
        <dbReference type="ChEBI" id="CHEBI:456216"/>
        <dbReference type="EC" id="2.7.4.6"/>
    </reaction>
</comment>
<comment type="catalytic activity">
    <reaction evidence="1">
        <text>a ribonucleoside 5'-diphosphate + ATP = a ribonucleoside 5'-triphosphate + ADP</text>
        <dbReference type="Rhea" id="RHEA:18113"/>
        <dbReference type="ChEBI" id="CHEBI:30616"/>
        <dbReference type="ChEBI" id="CHEBI:57930"/>
        <dbReference type="ChEBI" id="CHEBI:61557"/>
        <dbReference type="ChEBI" id="CHEBI:456216"/>
        <dbReference type="EC" id="2.7.4.6"/>
    </reaction>
</comment>
<comment type="cofactor">
    <cofactor evidence="1">
        <name>Mg(2+)</name>
        <dbReference type="ChEBI" id="CHEBI:18420"/>
    </cofactor>
</comment>
<comment type="subunit">
    <text evidence="1">Homotetramer.</text>
</comment>
<comment type="subcellular location">
    <subcellularLocation>
        <location evidence="1">Cytoplasm</location>
    </subcellularLocation>
</comment>
<comment type="similarity">
    <text evidence="1">Belongs to the NDK family.</text>
</comment>
<sequence>MAIQRTFSILKPDATERNITGAINALIEKAGLRIVAQKRIHMTRGQAETFYAVHKERPFFGELVDFMISGPVVVQVLEGENAIAKYRDVMGATDPSKAADGTIRKAHAKSIGENSVHGSDAPETAAIEIAQFFAGNEIVG</sequence>
<name>NDK_RHOPS</name>
<gene>
    <name evidence="1" type="primary">ndk</name>
    <name type="ordered locus">RPD_2961</name>
</gene>
<reference key="1">
    <citation type="submission" date="2006-03" db="EMBL/GenBank/DDBJ databases">
        <title>Complete sequence of Rhodopseudomonas palustris BisB5.</title>
        <authorList>
            <consortium name="US DOE Joint Genome Institute"/>
            <person name="Copeland A."/>
            <person name="Lucas S."/>
            <person name="Lapidus A."/>
            <person name="Barry K."/>
            <person name="Detter J.C."/>
            <person name="Glavina del Rio T."/>
            <person name="Hammon N."/>
            <person name="Israni S."/>
            <person name="Dalin E."/>
            <person name="Tice H."/>
            <person name="Pitluck S."/>
            <person name="Chain P."/>
            <person name="Malfatti S."/>
            <person name="Shin M."/>
            <person name="Vergez L."/>
            <person name="Schmutz J."/>
            <person name="Larimer F."/>
            <person name="Land M."/>
            <person name="Hauser L."/>
            <person name="Pelletier D.A."/>
            <person name="Kyrpides N."/>
            <person name="Lykidis A."/>
            <person name="Oda Y."/>
            <person name="Harwood C.S."/>
            <person name="Richardson P."/>
        </authorList>
    </citation>
    <scope>NUCLEOTIDE SEQUENCE [LARGE SCALE GENOMIC DNA]</scope>
    <source>
        <strain>BisB5</strain>
    </source>
</reference>
<feature type="chain" id="PRO_0000267797" description="Nucleoside diphosphate kinase">
    <location>
        <begin position="1"/>
        <end position="140"/>
    </location>
</feature>
<feature type="active site" description="Pros-phosphohistidine intermediate" evidence="1">
    <location>
        <position position="117"/>
    </location>
</feature>
<feature type="binding site" evidence="1">
    <location>
        <position position="11"/>
    </location>
    <ligand>
        <name>ATP</name>
        <dbReference type="ChEBI" id="CHEBI:30616"/>
    </ligand>
</feature>
<feature type="binding site" evidence="1">
    <location>
        <position position="59"/>
    </location>
    <ligand>
        <name>ATP</name>
        <dbReference type="ChEBI" id="CHEBI:30616"/>
    </ligand>
</feature>
<feature type="binding site" evidence="1">
    <location>
        <position position="87"/>
    </location>
    <ligand>
        <name>ATP</name>
        <dbReference type="ChEBI" id="CHEBI:30616"/>
    </ligand>
</feature>
<feature type="binding site" evidence="1">
    <location>
        <position position="93"/>
    </location>
    <ligand>
        <name>ATP</name>
        <dbReference type="ChEBI" id="CHEBI:30616"/>
    </ligand>
</feature>
<feature type="binding site" evidence="1">
    <location>
        <position position="104"/>
    </location>
    <ligand>
        <name>ATP</name>
        <dbReference type="ChEBI" id="CHEBI:30616"/>
    </ligand>
</feature>
<feature type="binding site" evidence="1">
    <location>
        <position position="114"/>
    </location>
    <ligand>
        <name>ATP</name>
        <dbReference type="ChEBI" id="CHEBI:30616"/>
    </ligand>
</feature>
<proteinExistence type="inferred from homology"/>
<organism>
    <name type="scientific">Rhodopseudomonas palustris (strain BisB5)</name>
    <dbReference type="NCBI Taxonomy" id="316057"/>
    <lineage>
        <taxon>Bacteria</taxon>
        <taxon>Pseudomonadati</taxon>
        <taxon>Pseudomonadota</taxon>
        <taxon>Alphaproteobacteria</taxon>
        <taxon>Hyphomicrobiales</taxon>
        <taxon>Nitrobacteraceae</taxon>
        <taxon>Rhodopseudomonas</taxon>
    </lineage>
</organism>
<accession>Q135Q2</accession>